<dbReference type="EC" id="7.1.1.9"/>
<dbReference type="EMBL" id="J01420">
    <property type="protein sequence ID" value="AAB48646.1"/>
    <property type="molecule type" value="Genomic_DNA"/>
</dbReference>
<dbReference type="EMBL" id="V00711">
    <property type="protein sequence ID" value="CAA24082.1"/>
    <property type="molecule type" value="Genomic_DNA"/>
</dbReference>
<dbReference type="EMBL" id="AY172335">
    <property type="protein sequence ID" value="AAN85124.1"/>
    <property type="molecule type" value="Genomic_DNA"/>
</dbReference>
<dbReference type="EMBL" id="U39315">
    <property type="protein sequence ID" value="AAA85227.1"/>
    <property type="molecule type" value="Genomic_DNA"/>
</dbReference>
<dbReference type="PIR" id="A00465">
    <property type="entry name" value="ODMS1"/>
</dbReference>
<dbReference type="PDB" id="7O37">
    <property type="method" value="EM"/>
    <property type="resolution" value="3.20 A"/>
    <property type="chains" value="a=1-514"/>
</dbReference>
<dbReference type="PDB" id="7O3C">
    <property type="method" value="EM"/>
    <property type="resolution" value="3.30 A"/>
    <property type="chains" value="a=1-514"/>
</dbReference>
<dbReference type="PDB" id="7O3E">
    <property type="method" value="EM"/>
    <property type="resolution" value="3.60 A"/>
    <property type="chains" value="a=1-514"/>
</dbReference>
<dbReference type="PDB" id="8PW5">
    <property type="method" value="EM"/>
    <property type="resolution" value="3.60 A"/>
    <property type="chains" value="a/n=1-514"/>
</dbReference>
<dbReference type="PDB" id="8PW6">
    <property type="method" value="EM"/>
    <property type="resolution" value="3.30 A"/>
    <property type="chains" value="n=1-514"/>
</dbReference>
<dbReference type="PDB" id="8PW7">
    <property type="method" value="EM"/>
    <property type="resolution" value="3.50 A"/>
    <property type="chains" value="n=1-514"/>
</dbReference>
<dbReference type="PDBsum" id="7O37"/>
<dbReference type="PDBsum" id="7O3C"/>
<dbReference type="PDBsum" id="7O3E"/>
<dbReference type="PDBsum" id="8PW5"/>
<dbReference type="PDBsum" id="8PW6"/>
<dbReference type="PDBsum" id="8PW7"/>
<dbReference type="EMDB" id="EMD-12702"/>
<dbReference type="EMDB" id="EMD-12703"/>
<dbReference type="EMDB" id="EMD-12705"/>
<dbReference type="EMDB" id="EMD-17989"/>
<dbReference type="EMDB" id="EMD-17990"/>
<dbReference type="EMDB" id="EMD-17991"/>
<dbReference type="SMR" id="P00397"/>
<dbReference type="DIP" id="DIP-61656N"/>
<dbReference type="FunCoup" id="P00397">
    <property type="interactions" value="171"/>
</dbReference>
<dbReference type="IntAct" id="P00397">
    <property type="interactions" value="3"/>
</dbReference>
<dbReference type="MINT" id="P00397"/>
<dbReference type="STRING" id="10090.ENSMUSP00000080993"/>
<dbReference type="GlyGen" id="P00397">
    <property type="glycosylation" value="2 sites, 1 O-linked glycan (2 sites)"/>
</dbReference>
<dbReference type="iPTMnet" id="P00397"/>
<dbReference type="MetOSite" id="P00397"/>
<dbReference type="PhosphoSitePlus" id="P00397"/>
<dbReference type="SwissPalm" id="P00397"/>
<dbReference type="jPOST" id="P00397"/>
<dbReference type="PaxDb" id="10090-ENSMUSP00000080993"/>
<dbReference type="PeptideAtlas" id="P00397"/>
<dbReference type="ProteomicsDB" id="284149"/>
<dbReference type="Pumba" id="P00397"/>
<dbReference type="Antibodypedia" id="4261">
    <property type="antibodies" value="209 antibodies from 32 providers"/>
</dbReference>
<dbReference type="Ensembl" id="ENSMUST00000082402.1">
    <property type="protein sequence ID" value="ENSMUSP00000080993.1"/>
    <property type="gene ID" value="ENSMUSG00000064351.1"/>
</dbReference>
<dbReference type="KEGG" id="mmu:17708"/>
<dbReference type="AGR" id="MGI:102504"/>
<dbReference type="CTD" id="4512"/>
<dbReference type="MGI" id="MGI:102504">
    <property type="gene designation" value="mt-Co1"/>
</dbReference>
<dbReference type="VEuPathDB" id="HostDB:ENSMUSG00000064351"/>
<dbReference type="eggNOG" id="KOG4769">
    <property type="taxonomic scope" value="Eukaryota"/>
</dbReference>
<dbReference type="GeneTree" id="ENSGT00390000001518"/>
<dbReference type="HOGENOM" id="CLU_011899_7_3_1"/>
<dbReference type="InParanoid" id="P00397"/>
<dbReference type="OMA" id="WAMMSIG"/>
<dbReference type="OrthoDB" id="10002679at2759"/>
<dbReference type="PhylomeDB" id="P00397"/>
<dbReference type="Reactome" id="R-MMU-5628897">
    <property type="pathway name" value="TP53 Regulates Metabolic Genes"/>
</dbReference>
<dbReference type="Reactome" id="R-MMU-611105">
    <property type="pathway name" value="Respiratory electron transport"/>
</dbReference>
<dbReference type="Reactome" id="R-MMU-9707564">
    <property type="pathway name" value="Cytoprotection by HMOX1"/>
</dbReference>
<dbReference type="Reactome" id="R-MMU-9837999">
    <property type="pathway name" value="Mitochondrial protein degradation"/>
</dbReference>
<dbReference type="Reactome" id="R-MMU-9864848">
    <property type="pathway name" value="Complex IV assembly"/>
</dbReference>
<dbReference type="UniPathway" id="UPA00705"/>
<dbReference type="ChiTaRS" id="mt-Co1">
    <property type="organism name" value="mouse"/>
</dbReference>
<dbReference type="PRO" id="PR:P00397"/>
<dbReference type="Proteomes" id="UP000000589">
    <property type="component" value="Mitochondrion MT"/>
</dbReference>
<dbReference type="RNAct" id="P00397">
    <property type="molecule type" value="protein"/>
</dbReference>
<dbReference type="Bgee" id="ENSMUSG00000064351">
    <property type="expression patterns" value="Expressed in dentate gyrus of hippocampal formation granule cell and 64 other cell types or tissues"/>
</dbReference>
<dbReference type="ExpressionAtlas" id="P00397">
    <property type="expression patterns" value="baseline and differential"/>
</dbReference>
<dbReference type="GO" id="GO:0005743">
    <property type="term" value="C:mitochondrial inner membrane"/>
    <property type="evidence" value="ECO:0000314"/>
    <property type="project" value="UniProtKB"/>
</dbReference>
<dbReference type="GO" id="GO:0005739">
    <property type="term" value="C:mitochondrion"/>
    <property type="evidence" value="ECO:0000314"/>
    <property type="project" value="MGI"/>
</dbReference>
<dbReference type="GO" id="GO:0045277">
    <property type="term" value="C:respiratory chain complex IV"/>
    <property type="evidence" value="ECO:0000314"/>
    <property type="project" value="UniProtKB"/>
</dbReference>
<dbReference type="GO" id="GO:0004129">
    <property type="term" value="F:cytochrome-c oxidase activity"/>
    <property type="evidence" value="ECO:0000314"/>
    <property type="project" value="MGI"/>
</dbReference>
<dbReference type="GO" id="GO:0020037">
    <property type="term" value="F:heme binding"/>
    <property type="evidence" value="ECO:0007669"/>
    <property type="project" value="InterPro"/>
</dbReference>
<dbReference type="GO" id="GO:0046872">
    <property type="term" value="F:metal ion binding"/>
    <property type="evidence" value="ECO:0007669"/>
    <property type="project" value="UniProtKB-KW"/>
</dbReference>
<dbReference type="GO" id="GO:0021549">
    <property type="term" value="P:cerebellum development"/>
    <property type="evidence" value="ECO:0007669"/>
    <property type="project" value="Ensembl"/>
</dbReference>
<dbReference type="GO" id="GO:0006119">
    <property type="term" value="P:oxidative phosphorylation"/>
    <property type="evidence" value="ECO:0007669"/>
    <property type="project" value="UniProtKB-UniPathway"/>
</dbReference>
<dbReference type="GO" id="GO:0046688">
    <property type="term" value="P:response to copper ion"/>
    <property type="evidence" value="ECO:0007669"/>
    <property type="project" value="Ensembl"/>
</dbReference>
<dbReference type="GO" id="GO:0051602">
    <property type="term" value="P:response to electrical stimulus"/>
    <property type="evidence" value="ECO:0007669"/>
    <property type="project" value="Ensembl"/>
</dbReference>
<dbReference type="GO" id="GO:0001666">
    <property type="term" value="P:response to hypoxia"/>
    <property type="evidence" value="ECO:0007669"/>
    <property type="project" value="Ensembl"/>
</dbReference>
<dbReference type="GO" id="GO:0006979">
    <property type="term" value="P:response to oxidative stress"/>
    <property type="evidence" value="ECO:0007669"/>
    <property type="project" value="Ensembl"/>
</dbReference>
<dbReference type="CDD" id="cd01663">
    <property type="entry name" value="Cyt_c_Oxidase_I"/>
    <property type="match status" value="1"/>
</dbReference>
<dbReference type="FunFam" id="1.20.210.10:FF:000001">
    <property type="entry name" value="Cytochrome c oxidase subunit 1"/>
    <property type="match status" value="1"/>
</dbReference>
<dbReference type="Gene3D" id="1.20.210.10">
    <property type="entry name" value="Cytochrome c oxidase-like, subunit I domain"/>
    <property type="match status" value="1"/>
</dbReference>
<dbReference type="InterPro" id="IPR023616">
    <property type="entry name" value="Cyt_c_oxase-like_su1_dom"/>
</dbReference>
<dbReference type="InterPro" id="IPR036927">
    <property type="entry name" value="Cyt_c_oxase-like_su1_sf"/>
</dbReference>
<dbReference type="InterPro" id="IPR000883">
    <property type="entry name" value="Cyt_C_Oxase_1"/>
</dbReference>
<dbReference type="InterPro" id="IPR023615">
    <property type="entry name" value="Cyt_c_Oxase_su1_BS"/>
</dbReference>
<dbReference type="InterPro" id="IPR033944">
    <property type="entry name" value="Cyt_c_oxase_su1_dom"/>
</dbReference>
<dbReference type="PANTHER" id="PTHR10422">
    <property type="entry name" value="CYTOCHROME C OXIDASE SUBUNIT 1"/>
    <property type="match status" value="1"/>
</dbReference>
<dbReference type="PANTHER" id="PTHR10422:SF18">
    <property type="entry name" value="CYTOCHROME C OXIDASE SUBUNIT 1"/>
    <property type="match status" value="1"/>
</dbReference>
<dbReference type="Pfam" id="PF00115">
    <property type="entry name" value="COX1"/>
    <property type="match status" value="1"/>
</dbReference>
<dbReference type="PRINTS" id="PR01165">
    <property type="entry name" value="CYCOXIDASEI"/>
</dbReference>
<dbReference type="SUPFAM" id="SSF81442">
    <property type="entry name" value="Cytochrome c oxidase subunit I-like"/>
    <property type="match status" value="1"/>
</dbReference>
<dbReference type="PROSITE" id="PS50855">
    <property type="entry name" value="COX1"/>
    <property type="match status" value="1"/>
</dbReference>
<dbReference type="PROSITE" id="PS00077">
    <property type="entry name" value="COX1_CUB"/>
    <property type="match status" value="1"/>
</dbReference>
<organism>
    <name type="scientific">Mus musculus</name>
    <name type="common">Mouse</name>
    <dbReference type="NCBI Taxonomy" id="10090"/>
    <lineage>
        <taxon>Eukaryota</taxon>
        <taxon>Metazoa</taxon>
        <taxon>Chordata</taxon>
        <taxon>Craniata</taxon>
        <taxon>Vertebrata</taxon>
        <taxon>Euteleostomi</taxon>
        <taxon>Mammalia</taxon>
        <taxon>Eutheria</taxon>
        <taxon>Euarchontoglires</taxon>
        <taxon>Glires</taxon>
        <taxon>Rodentia</taxon>
        <taxon>Myomorpha</taxon>
        <taxon>Muroidea</taxon>
        <taxon>Muridae</taxon>
        <taxon>Murinae</taxon>
        <taxon>Mus</taxon>
        <taxon>Mus</taxon>
    </lineage>
</organism>
<evidence type="ECO:0000250" key="1">
    <source>
        <dbReference type="UniProtKB" id="P00395"/>
    </source>
</evidence>
<evidence type="ECO:0000250" key="2">
    <source>
        <dbReference type="UniProtKB" id="P00396"/>
    </source>
</evidence>
<evidence type="ECO:0000250" key="3">
    <source>
        <dbReference type="UniProtKB" id="P00401"/>
    </source>
</evidence>
<evidence type="ECO:0000269" key="4">
    <source>
    </source>
</evidence>
<evidence type="ECO:0000269" key="5">
    <source>
    </source>
</evidence>
<evidence type="ECO:0000305" key="6"/>
<evidence type="ECO:0000312" key="7">
    <source>
        <dbReference type="PDB" id="7O3E"/>
    </source>
</evidence>
<evidence type="ECO:0007744" key="8">
    <source>
        <dbReference type="PDB" id="7O37"/>
    </source>
</evidence>
<evidence type="ECO:0007744" key="9">
    <source>
        <dbReference type="PDB" id="7O3C"/>
    </source>
</evidence>
<evidence type="ECO:0007744" key="10">
    <source>
        <dbReference type="PDB" id="8PW5"/>
    </source>
</evidence>
<evidence type="ECO:0007829" key="11">
    <source>
        <dbReference type="PDB" id="7O37"/>
    </source>
</evidence>
<evidence type="ECO:0007829" key="12">
    <source>
        <dbReference type="PDB" id="7O3C"/>
    </source>
</evidence>
<reference key="1">
    <citation type="journal article" date="1981" name="Cell">
        <title>Sequence and gene organization of mouse mitochondrial DNA.</title>
        <authorList>
            <person name="Bibb M.J."/>
            <person name="van Etten R.A."/>
            <person name="Wright C.T."/>
            <person name="Walberg M.W."/>
            <person name="Clayton D.A."/>
        </authorList>
    </citation>
    <scope>NUCLEOTIDE SEQUENCE [GENOMIC DNA]</scope>
</reference>
<reference key="2">
    <citation type="journal article" date="2003" name="Nucleic Acids Res.">
        <title>Revisiting the mouse mitochondrial DNA sequence.</title>
        <authorList>
            <person name="Bayona-Bafaluy M.P."/>
            <person name="Acin-Perez R."/>
            <person name="Mullikin J.C."/>
            <person name="Park J.S."/>
            <person name="Moreno-Loshuertos R."/>
            <person name="Hu P."/>
            <person name="Perez-Martos A."/>
            <person name="Fernandez-Silva P."/>
            <person name="Bai Y."/>
            <person name="Enriquez J.A."/>
        </authorList>
    </citation>
    <scope>NUCLEOTIDE SEQUENCE [LARGE SCALE GENOMIC DNA]</scope>
    <source>
        <strain>C57BL/6J</strain>
    </source>
</reference>
<reference key="3">
    <citation type="journal article" date="1996" name="J. Immunol.">
        <title>The COI mitochondrial gene encodes a minor histocompatibility antigen presented by H2-M3.</title>
        <authorList>
            <person name="Morse M.C."/>
            <person name="Bleau G."/>
            <person name="Dabhi V.M."/>
            <person name="Hetu F."/>
            <person name="Drobetsky E.A."/>
            <person name="Lindahl K.F."/>
            <person name="Perreault C."/>
        </authorList>
    </citation>
    <scope>NUCLEOTIDE SEQUENCE [GENOMIC DNA] OF 1-45</scope>
    <source>
        <strain>C57BL/6J</strain>
        <tissue>Spleen</tissue>
    </source>
</reference>
<reference key="4">
    <citation type="journal article" date="2010" name="Cell">
        <title>A tissue-specific atlas of mouse protein phosphorylation and expression.</title>
        <authorList>
            <person name="Huttlin E.L."/>
            <person name="Jedrychowski M.P."/>
            <person name="Elias J.E."/>
            <person name="Goswami T."/>
            <person name="Rad R."/>
            <person name="Beausoleil S.A."/>
            <person name="Villen J."/>
            <person name="Haas W."/>
            <person name="Sowa M.E."/>
            <person name="Gygi S.P."/>
        </authorList>
    </citation>
    <scope>IDENTIFICATION BY MASS SPECTROMETRY [LARGE SCALE ANALYSIS]</scope>
    <source>
        <tissue>Brain</tissue>
        <tissue>Brown adipose tissue</tissue>
        <tissue>Heart</tissue>
        <tissue>Kidney</tissue>
        <tissue>Liver</tissue>
        <tissue>Lung</tissue>
        <tissue>Spleen</tissue>
        <tissue>Testis</tissue>
    </source>
</reference>
<reference evidence="7 8 9" key="5">
    <citation type="journal article" date="2021" name="Nature">
        <title>Structure and assembly of the mammalian mitochondrial supercomplex CIII2CIV.</title>
        <authorList>
            <person name="Vercellino I."/>
            <person name="Sazanov L.A."/>
        </authorList>
    </citation>
    <scope>STRUCTURE BY ELECTRON MICROSCOPY (3.20 ANGSTROMS) IN COMPLEX WITH MITOCHONDRIAL RESPIRATORY SUPERCOMPLEX</scope>
    <scope>FUNCTION</scope>
    <scope>PATHWAY</scope>
    <scope>SUBCELLULAR LOCATION</scope>
    <scope>SUBUNIT</scope>
</reference>
<reference evidence="10" key="6">
    <citation type="journal article" date="2024" name="Nat. Struct. Mol. Biol.">
        <title>SCAF1 drives the compositional diversity of mammalian respirasomes.</title>
        <authorList>
            <person name="Vercellino I."/>
            <person name="Sazanov L.A."/>
        </authorList>
    </citation>
    <scope>STRUCTURE BY ELECTRON MICROSCOPY (3.60 ANGSTROMS) IN COMPLEX WITH MITOCHONDRIAL RESPIRATORY SUPERCOMPLEX</scope>
    <scope>FUNCTION</scope>
    <scope>PATHWAY</scope>
    <scope>SUBCELLULAR LOCATION</scope>
    <scope>SUBUNIT</scope>
</reference>
<proteinExistence type="evidence at protein level"/>
<protein>
    <recommendedName>
        <fullName>Cytochrome c oxidase subunit 1</fullName>
        <ecNumber>7.1.1.9</ecNumber>
    </recommendedName>
    <alternativeName>
        <fullName>Cytochrome c oxidase polypeptide I</fullName>
    </alternativeName>
</protein>
<keyword id="KW-0002">3D-structure</keyword>
<keyword id="KW-0106">Calcium</keyword>
<keyword id="KW-0186">Copper</keyword>
<keyword id="KW-0249">Electron transport</keyword>
<keyword id="KW-0349">Heme</keyword>
<keyword id="KW-0408">Iron</keyword>
<keyword id="KW-0460">Magnesium</keyword>
<keyword id="KW-0472">Membrane</keyword>
<keyword id="KW-0479">Metal-binding</keyword>
<keyword id="KW-0496">Mitochondrion</keyword>
<keyword id="KW-0999">Mitochondrion inner membrane</keyword>
<keyword id="KW-1185">Reference proteome</keyword>
<keyword id="KW-0679">Respiratory chain</keyword>
<keyword id="KW-0915">Sodium</keyword>
<keyword id="KW-1278">Translocase</keyword>
<keyword id="KW-0812">Transmembrane</keyword>
<keyword id="KW-1133">Transmembrane helix</keyword>
<keyword id="KW-0813">Transport</keyword>
<geneLocation type="mitochondrion"/>
<gene>
    <name type="primary">Mtco1</name>
    <name type="synonym">COI</name>
    <name type="synonym">mt-Co1</name>
</gene>
<accession>P00397</accession>
<comment type="function">
    <text evidence="4 5">Component of the cytochrome c oxidase, the last enzyme in the mitochondrial electron transport chain which drives oxidative phosphorylation. The respiratory chain contains 3 multisubunit complexes succinate dehydrogenase (complex II, CII), ubiquinol-cytochrome c oxidoreductase (cytochrome b-c1 complex, complex III, CIII) and cytochrome c oxidase (complex IV, CIV), that cooperate to transfer electrons derived from NADH and succinate to molecular oxygen, creating an electrochemical gradient over the inner membrane that drives transmembrane transport and the ATP synthase. Cytochrome c oxidase is the component of the respiratory chain that catalyzes the reduction of oxygen to water. Electrons originating from reduced cytochrome c in the intermembrane space (IMS) are transferred via the dinuclear copper A center (CU(A)) of subunit 2 and heme A of subunit 1 to the active site in subunit 1, a binuclear center (BNC) formed by heme A3 and copper B (CU(B)). The BNC reduces molecular oxygen to 2 water molecules using 4 electrons from cytochrome c in the IMS and 4 protons from the mitochondrial matrix.</text>
</comment>
<comment type="catalytic activity">
    <reaction evidence="3">
        <text>4 Fe(II)-[cytochrome c] + O2 + 8 H(+)(in) = 4 Fe(III)-[cytochrome c] + 2 H2O + 4 H(+)(out)</text>
        <dbReference type="Rhea" id="RHEA:11436"/>
        <dbReference type="Rhea" id="RHEA-COMP:10350"/>
        <dbReference type="Rhea" id="RHEA-COMP:14399"/>
        <dbReference type="ChEBI" id="CHEBI:15377"/>
        <dbReference type="ChEBI" id="CHEBI:15378"/>
        <dbReference type="ChEBI" id="CHEBI:15379"/>
        <dbReference type="ChEBI" id="CHEBI:29033"/>
        <dbReference type="ChEBI" id="CHEBI:29034"/>
        <dbReference type="EC" id="7.1.1.9"/>
    </reaction>
    <physiologicalReaction direction="left-to-right" evidence="3">
        <dbReference type="Rhea" id="RHEA:11437"/>
    </physiologicalReaction>
</comment>
<comment type="cofactor">
    <cofactor evidence="4">
        <name>heme</name>
        <dbReference type="ChEBI" id="CHEBI:30413"/>
    </cofactor>
    <text evidence="4">Binds 2 heme A groups non-covalently per subunit.</text>
</comment>
<comment type="cofactor">
    <cofactor evidence="4">
        <name>Cu cation</name>
        <dbReference type="ChEBI" id="CHEBI:23378"/>
    </cofactor>
    <text evidence="4">Binds a copper B center.</text>
</comment>
<comment type="pathway">
    <text evidence="4 5">Energy metabolism; oxidative phosphorylation.</text>
</comment>
<comment type="subunit">
    <text evidence="1 2 4 5">Component of the cytochrome c oxidase (complex IV, CIV), a multisubunit enzyme composed of 14 subunits (PubMed:34616041, PubMed:38575788). The complex is composed of a catalytic core of 3 subunits MT-CO1, MT-CO2 and MT-CO3, encoded in the mitochondrial DNA, and 11 supernumerary subunits COX4I, COX5A, COX5B, COX6A, COX6B, COX6C, COX7A, COX7B, COX7C, COX8 and NDUFA4, which are encoded in the nuclear genome (PubMed:34616041, PubMed:38575788). The complex exists as a monomer or a dimer and forms supercomplexes (SCs) in the inner mitochondrial membrane with NADH-ubiquinone oxidoreductase (complex I, CI) and ubiquinol-cytochrome c oxidoreductase (cytochrome b-c1 complex, complex III, CIII), resulting in different assemblies (supercomplex SCI(1)III(2)IV(1) and megacomplex MCI(2)III(2)IV(2)) (PubMed:34616041, PubMed:38575788). As a newly synthesized protein, rapidly incorporates into a multi-subunit assembly intermediate in the inner membrane, called MITRAC (mitochondrial translation regulation assembly intermediate of cytochrome c oxidase) complex, whose core components are COA3/MITRAC12 and COX14. Within the MITRAC complex, interacts with COA3 and with SMIM20/MITRAC7; the interaction with SMIM20 stabilizes the newly synthesized MT-CO1 and prevents its premature turnover. Interacts with TMEM177 in a COX20-dependent manner (By similarity).</text>
</comment>
<comment type="subcellular location">
    <subcellularLocation>
        <location evidence="4 5">Mitochondrion inner membrane</location>
        <topology evidence="4 5">Multi-pass membrane protein</topology>
    </subcellularLocation>
</comment>
<comment type="similarity">
    <text evidence="6">Belongs to the heme-copper respiratory oxidase family.</text>
</comment>
<name>COX1_MOUSE</name>
<sequence>MFINRWLFSTNHKDIGTLYLLFGAWAGMVGTALSILIRAELGQPGALLGDDQIYNVIVTAHAFVMIFFMVMPMMIGGFGNWLVPLMIGAPDMAFPRMNNMSFWLLPPSFLLLLASSMVEAGAGTGWTVYPPLAGNLAHAGASVDLTIFSLHLAGVSSILGAINFITTIINMKPPAMTQYQTPLFVWSVLITAVLLLLSLPVLAAGITMLLTDRNLNTTFFDPAGGGDPILYQHLFWFFGHPEVYILILPGFGIISHVVTYYSGKKEPFGYMGMVWAMMSIGFLGFIVWAHHMFTVGLDVDTRAYFTSATMIIAIPTGVKVFSWLATLHGGNIKWSPAMLWALGFIFLFTVGGLTGIVLSNSSLDIVLHDTYYVVAHFHYVLSMGAVFAIMAGFVHWFPLFSGFTLDDTWAKAHFAIMFVGVNMTFFPQHFLGLSGMPRRYSDYPDAYTTWNTVSSMGSFISLTAVLIMIFMIWEAFASKREVMSVSYASTNLEWLHGCPPPYHTFEEPTYVKVK</sequence>
<feature type="chain" id="PRO_0000183363" description="Cytochrome c oxidase subunit 1">
    <location>
        <begin position="1"/>
        <end position="514"/>
    </location>
</feature>
<feature type="topological domain" description="Mitochondrial matrix" evidence="4 8 9">
    <location>
        <begin position="1"/>
        <end position="14"/>
    </location>
</feature>
<feature type="transmembrane region" description="Helical; Name=I" evidence="4 8 9">
    <location>
        <begin position="15"/>
        <end position="39"/>
    </location>
</feature>
<feature type="topological domain" description="Mitochondrial intermembrane" evidence="4 8 9">
    <location>
        <begin position="40"/>
        <end position="55"/>
    </location>
</feature>
<feature type="transmembrane region" description="Helical; Name=II" evidence="4 8 9">
    <location>
        <begin position="56"/>
        <end position="80"/>
    </location>
</feature>
<feature type="topological domain" description="Mitochondrial matrix" evidence="4 8 9">
    <location>
        <begin position="81"/>
        <end position="93"/>
    </location>
</feature>
<feature type="transmembrane region" description="Helical; Name=III" evidence="4 8 9">
    <location>
        <begin position="94"/>
        <end position="117"/>
    </location>
</feature>
<feature type="topological domain" description="Mitochondrial intermembrane" evidence="4 8 9">
    <location>
        <begin position="118"/>
        <end position="143"/>
    </location>
</feature>
<feature type="transmembrane region" description="Helical; Name=IV" evidence="4 8 9">
    <location>
        <begin position="144"/>
        <end position="166"/>
    </location>
</feature>
<feature type="topological domain" description="Mitochondrial matrix" evidence="4 8 9">
    <location>
        <begin position="167"/>
        <end position="185"/>
    </location>
</feature>
<feature type="transmembrane region" description="Helical; Name=V" evidence="4 8 9">
    <location>
        <begin position="186"/>
        <end position="208"/>
    </location>
</feature>
<feature type="topological domain" description="Mitochondrial intermembrane" evidence="4 8 9">
    <location>
        <begin position="209"/>
        <end position="232"/>
    </location>
</feature>
<feature type="transmembrane region" description="Helical; Name=VI" evidence="4 8 9">
    <location>
        <begin position="233"/>
        <end position="255"/>
    </location>
</feature>
<feature type="topological domain" description="Mitochondrial matrix" evidence="4 8 9">
    <location>
        <begin position="256"/>
        <end position="271"/>
    </location>
</feature>
<feature type="transmembrane region" description="Helical; Name=VII" evidence="4 8 9">
    <location>
        <begin position="272"/>
        <end position="291"/>
    </location>
</feature>
<feature type="topological domain" description="Mitochondrial intermembrane" evidence="4 8 9">
    <location>
        <begin position="292"/>
        <end position="302"/>
    </location>
</feature>
<feature type="transmembrane region" description="Helical; Name=VIII" evidence="4 8 9">
    <location>
        <begin position="303"/>
        <end position="324"/>
    </location>
</feature>
<feature type="topological domain" description="Mitochondrial matrix" evidence="4 8 9">
    <location>
        <begin position="325"/>
        <end position="337"/>
    </location>
</feature>
<feature type="transmembrane region" description="Helical; Name=IX" evidence="4 8 9">
    <location>
        <begin position="338"/>
        <end position="360"/>
    </location>
</feature>
<feature type="topological domain" description="Mitochondrial intermembrane" evidence="4 8 9">
    <location>
        <begin position="361"/>
        <end position="370"/>
    </location>
</feature>
<feature type="transmembrane region" description="Helical; Name=X" evidence="4 8 9">
    <location>
        <begin position="371"/>
        <end position="393"/>
    </location>
</feature>
<feature type="topological domain" description="Mitochondrial matrix" evidence="4 8 9">
    <location>
        <begin position="394"/>
        <end position="408"/>
    </location>
</feature>
<feature type="transmembrane region" description="Helical; Name=XI" evidence="4 8 9">
    <location>
        <begin position="409"/>
        <end position="430"/>
    </location>
</feature>
<feature type="topological domain" description="Mitochondrial intermembrane" evidence="4 8 9">
    <location>
        <begin position="431"/>
        <end position="449"/>
    </location>
</feature>
<feature type="transmembrane region" description="Helical; Name=XII" evidence="4 8 9">
    <location>
        <begin position="450"/>
        <end position="473"/>
    </location>
</feature>
<feature type="topological domain" description="Mitochondrial matrix" evidence="4 8 9">
    <location>
        <begin position="474"/>
        <end position="514"/>
    </location>
</feature>
<feature type="binding site" evidence="4 8 9">
    <location>
        <position position="40"/>
    </location>
    <ligand>
        <name>Na(+)</name>
        <dbReference type="ChEBI" id="CHEBI:29101"/>
    </ligand>
</feature>
<feature type="binding site" evidence="4 8 9">
    <location>
        <position position="45"/>
    </location>
    <ligand>
        <name>Na(+)</name>
        <dbReference type="ChEBI" id="CHEBI:29101"/>
    </ligand>
</feature>
<feature type="binding site" description="axial binding residue" evidence="2">
    <location>
        <position position="61"/>
    </location>
    <ligand>
        <name>Fe(II)-heme a</name>
        <dbReference type="ChEBI" id="CHEBI:61715"/>
        <note>low-spin</note>
    </ligand>
    <ligandPart>
        <name>Fe</name>
        <dbReference type="ChEBI" id="CHEBI:18248"/>
    </ligandPart>
</feature>
<feature type="binding site" evidence="4 8 9">
    <location>
        <position position="240"/>
    </location>
    <ligand>
        <name>Cu cation</name>
        <dbReference type="ChEBI" id="CHEBI:23378"/>
        <label>B</label>
    </ligand>
</feature>
<feature type="binding site" evidence="2">
    <location>
        <position position="244"/>
    </location>
    <ligand>
        <name>O2</name>
        <dbReference type="ChEBI" id="CHEBI:15379"/>
    </ligand>
</feature>
<feature type="binding site" evidence="4 8 9">
    <location>
        <position position="290"/>
    </location>
    <ligand>
        <name>Cu cation</name>
        <dbReference type="ChEBI" id="CHEBI:23378"/>
        <label>B</label>
    </ligand>
</feature>
<feature type="binding site" evidence="4 8 9">
    <location>
        <position position="291"/>
    </location>
    <ligand>
        <name>Cu cation</name>
        <dbReference type="ChEBI" id="CHEBI:23378"/>
        <label>B</label>
    </ligand>
</feature>
<feature type="binding site" evidence="2">
    <location>
        <position position="368"/>
    </location>
    <ligand>
        <name>Mg(2+)</name>
        <dbReference type="ChEBI" id="CHEBI:18420"/>
        <note>ligand shared with MT-CO2</note>
    </ligand>
</feature>
<feature type="binding site" evidence="2">
    <location>
        <position position="369"/>
    </location>
    <ligand>
        <name>Mg(2+)</name>
        <dbReference type="ChEBI" id="CHEBI:18420"/>
        <note>ligand shared with MT-CO2</note>
    </ligand>
</feature>
<feature type="binding site" description="axial binding residue" evidence="4 8 9">
    <location>
        <position position="376"/>
    </location>
    <ligand>
        <name>heme a3</name>
        <dbReference type="ChEBI" id="CHEBI:83282"/>
        <note>high-spin</note>
    </ligand>
    <ligandPart>
        <name>Fe</name>
        <dbReference type="ChEBI" id="CHEBI:18248"/>
    </ligandPart>
</feature>
<feature type="binding site" description="axial binding residue" evidence="4 8 9">
    <location>
        <position position="378"/>
    </location>
    <ligand>
        <name>Fe(II)-heme a</name>
        <dbReference type="ChEBI" id="CHEBI:61715"/>
        <note>low-spin</note>
    </ligand>
    <ligandPart>
        <name>Fe</name>
        <dbReference type="ChEBI" id="CHEBI:18248"/>
    </ligandPart>
</feature>
<feature type="binding site" evidence="4 8 9">
    <location>
        <position position="441"/>
    </location>
    <ligand>
        <name>Na(+)</name>
        <dbReference type="ChEBI" id="CHEBI:29101"/>
    </ligand>
</feature>
<feature type="cross-link" description="1'-histidyl-3'-tyrosine (His-Tyr)" evidence="2">
    <location>
        <begin position="240"/>
        <end position="244"/>
    </location>
</feature>
<feature type="sequence conflict" description="In Ref. 1; AAB48646/CAA24082." evidence="6" ref="1">
    <original>L</original>
    <variation>P</variation>
    <location>
        <position position="136"/>
    </location>
</feature>
<feature type="sequence conflict" description="In Ref. 1; AAB48646/CAA24082." evidence="6" ref="1">
    <original>A</original>
    <variation>V</variation>
    <location>
        <position position="137"/>
    </location>
</feature>
<feature type="sequence conflict" description="In Ref. 1; AAB48646/CAA24082." evidence="6" ref="1">
    <original>Y</original>
    <variation>C</variation>
    <location>
        <position position="304"/>
    </location>
</feature>
<feature type="helix" evidence="11">
    <location>
        <begin position="3"/>
        <end position="7"/>
    </location>
</feature>
<feature type="helix" evidence="11">
    <location>
        <begin position="12"/>
        <end position="40"/>
    </location>
</feature>
<feature type="strand" evidence="11">
    <location>
        <begin position="43"/>
        <end position="45"/>
    </location>
</feature>
<feature type="strand" evidence="11">
    <location>
        <begin position="47"/>
        <end position="50"/>
    </location>
</feature>
<feature type="helix" evidence="11">
    <location>
        <begin position="51"/>
        <end position="67"/>
    </location>
</feature>
<feature type="helix" evidence="11">
    <location>
        <begin position="70"/>
        <end position="86"/>
    </location>
</feature>
<feature type="helix" evidence="11">
    <location>
        <begin position="95"/>
        <end position="115"/>
    </location>
</feature>
<feature type="strand" evidence="11">
    <location>
        <begin position="118"/>
        <end position="120"/>
    </location>
</feature>
<feature type="turn" evidence="11">
    <location>
        <begin position="130"/>
        <end position="133"/>
    </location>
</feature>
<feature type="turn" evidence="11">
    <location>
        <begin position="135"/>
        <end position="138"/>
    </location>
</feature>
<feature type="helix" evidence="11">
    <location>
        <begin position="142"/>
        <end position="170"/>
    </location>
</feature>
<feature type="helix" evidence="11">
    <location>
        <begin position="178"/>
        <end position="180"/>
    </location>
</feature>
<feature type="helix" evidence="11">
    <location>
        <begin position="183"/>
        <end position="214"/>
    </location>
</feature>
<feature type="helix" evidence="11">
    <location>
        <begin position="222"/>
        <end position="224"/>
    </location>
</feature>
<feature type="helix" evidence="11">
    <location>
        <begin position="228"/>
        <end position="261"/>
    </location>
</feature>
<feature type="helix" evidence="11">
    <location>
        <begin position="270"/>
        <end position="283"/>
    </location>
</feature>
<feature type="helix" evidence="11">
    <location>
        <begin position="288"/>
        <end position="291"/>
    </location>
</feature>
<feature type="helix" evidence="11">
    <location>
        <begin position="299"/>
        <end position="326"/>
    </location>
</feature>
<feature type="turn" evidence="11">
    <location>
        <begin position="327"/>
        <end position="329"/>
    </location>
</feature>
<feature type="helix" evidence="11">
    <location>
        <begin position="336"/>
        <end position="359"/>
    </location>
</feature>
<feature type="helix" evidence="11">
    <location>
        <begin position="361"/>
        <end position="367"/>
    </location>
</feature>
<feature type="helix" evidence="11">
    <location>
        <begin position="371"/>
        <end position="400"/>
    </location>
</feature>
<feature type="helix" evidence="11">
    <location>
        <begin position="407"/>
        <end position="425"/>
    </location>
</feature>
<feature type="helix" evidence="11">
    <location>
        <begin position="427"/>
        <end position="434"/>
    </location>
</feature>
<feature type="strand" evidence="11">
    <location>
        <begin position="437"/>
        <end position="439"/>
    </location>
</feature>
<feature type="helix" evidence="11">
    <location>
        <begin position="445"/>
        <end position="447"/>
    </location>
</feature>
<feature type="helix" evidence="11">
    <location>
        <begin position="448"/>
        <end position="478"/>
    </location>
</feature>
<feature type="strand" evidence="12">
    <location>
        <begin position="482"/>
        <end position="484"/>
    </location>
</feature>
<feature type="turn" evidence="11">
    <location>
        <begin position="486"/>
        <end position="490"/>
    </location>
</feature>
<feature type="helix" evidence="11">
    <location>
        <begin position="492"/>
        <end position="494"/>
    </location>
</feature>